<keyword id="KW-0687">Ribonucleoprotein</keyword>
<keyword id="KW-0689">Ribosomal protein</keyword>
<keyword id="KW-0694">RNA-binding</keyword>
<keyword id="KW-0699">rRNA-binding</keyword>
<sequence>MSLNIETKKVAVEEISAAIANAQTLVVAEYRGISVSSMTELRANARKEGVYLRVLKNTLARRAVQGTSFAELADQMVGPLVYAASEDAVAAAKVLHQFAKKDDKIVVKAGSYNGEVMNAAQVAELASIPSREELLSKLLFVMQAPVSGFARGLAALAEKKAGEEAA</sequence>
<feature type="chain" id="PRO_0000154675" description="Large ribosomal subunit protein uL10">
    <location>
        <begin position="1"/>
        <end position="166"/>
    </location>
</feature>
<name>RL10_NEIMA</name>
<organism>
    <name type="scientific">Neisseria meningitidis serogroup A / serotype 4A (strain DSM 15465 / Z2491)</name>
    <dbReference type="NCBI Taxonomy" id="122587"/>
    <lineage>
        <taxon>Bacteria</taxon>
        <taxon>Pseudomonadati</taxon>
        <taxon>Pseudomonadota</taxon>
        <taxon>Betaproteobacteria</taxon>
        <taxon>Neisseriales</taxon>
        <taxon>Neisseriaceae</taxon>
        <taxon>Neisseria</taxon>
    </lineage>
</organism>
<accession>P66046</accession>
<accession>A1IP05</accession>
<accession>Q9JQP7</accession>
<protein>
    <recommendedName>
        <fullName evidence="2">Large ribosomal subunit protein uL10</fullName>
    </recommendedName>
    <alternativeName>
        <fullName>50S ribosomal protein L10</fullName>
    </alternativeName>
</protein>
<dbReference type="EMBL" id="AL157959">
    <property type="protein sequence ID" value="CAM07462.1"/>
    <property type="molecule type" value="Genomic_DNA"/>
</dbReference>
<dbReference type="RefSeq" id="WP_002215373.1">
    <property type="nucleotide sequence ID" value="NC_003116.1"/>
</dbReference>
<dbReference type="SMR" id="P66046"/>
<dbReference type="EnsemblBacteria" id="CAM07462">
    <property type="protein sequence ID" value="CAM07462"/>
    <property type="gene ID" value="NMA0144"/>
</dbReference>
<dbReference type="GeneID" id="93387205"/>
<dbReference type="KEGG" id="nma:NMA0144"/>
<dbReference type="HOGENOM" id="CLU_092227_0_1_4"/>
<dbReference type="Proteomes" id="UP000000626">
    <property type="component" value="Chromosome"/>
</dbReference>
<dbReference type="GO" id="GO:0015934">
    <property type="term" value="C:large ribosomal subunit"/>
    <property type="evidence" value="ECO:0007669"/>
    <property type="project" value="InterPro"/>
</dbReference>
<dbReference type="GO" id="GO:0070180">
    <property type="term" value="F:large ribosomal subunit rRNA binding"/>
    <property type="evidence" value="ECO:0007669"/>
    <property type="project" value="UniProtKB-UniRule"/>
</dbReference>
<dbReference type="GO" id="GO:0003735">
    <property type="term" value="F:structural constituent of ribosome"/>
    <property type="evidence" value="ECO:0007669"/>
    <property type="project" value="InterPro"/>
</dbReference>
<dbReference type="GO" id="GO:0006412">
    <property type="term" value="P:translation"/>
    <property type="evidence" value="ECO:0007669"/>
    <property type="project" value="UniProtKB-UniRule"/>
</dbReference>
<dbReference type="CDD" id="cd05797">
    <property type="entry name" value="Ribosomal_L10"/>
    <property type="match status" value="1"/>
</dbReference>
<dbReference type="FunFam" id="3.30.70.1730:FF:000008">
    <property type="entry name" value="50S ribosomal protein L10"/>
    <property type="match status" value="1"/>
</dbReference>
<dbReference type="Gene3D" id="3.30.70.1730">
    <property type="match status" value="1"/>
</dbReference>
<dbReference type="Gene3D" id="6.10.250.290">
    <property type="match status" value="1"/>
</dbReference>
<dbReference type="HAMAP" id="MF_00362">
    <property type="entry name" value="Ribosomal_uL10"/>
    <property type="match status" value="1"/>
</dbReference>
<dbReference type="InterPro" id="IPR001790">
    <property type="entry name" value="Ribosomal_uL10"/>
</dbReference>
<dbReference type="InterPro" id="IPR043141">
    <property type="entry name" value="Ribosomal_uL10-like_sf"/>
</dbReference>
<dbReference type="InterPro" id="IPR022973">
    <property type="entry name" value="Ribosomal_uL10_bac"/>
</dbReference>
<dbReference type="InterPro" id="IPR047865">
    <property type="entry name" value="Ribosomal_uL10_bac_type"/>
</dbReference>
<dbReference type="InterPro" id="IPR002363">
    <property type="entry name" value="Ribosomal_uL10_CS_bac"/>
</dbReference>
<dbReference type="NCBIfam" id="NF000955">
    <property type="entry name" value="PRK00099.1-1"/>
    <property type="match status" value="1"/>
</dbReference>
<dbReference type="PANTHER" id="PTHR11560">
    <property type="entry name" value="39S RIBOSOMAL PROTEIN L10, MITOCHONDRIAL"/>
    <property type="match status" value="1"/>
</dbReference>
<dbReference type="Pfam" id="PF00466">
    <property type="entry name" value="Ribosomal_L10"/>
    <property type="match status" value="1"/>
</dbReference>
<dbReference type="SUPFAM" id="SSF160369">
    <property type="entry name" value="Ribosomal protein L10-like"/>
    <property type="match status" value="1"/>
</dbReference>
<dbReference type="PROSITE" id="PS01109">
    <property type="entry name" value="RIBOSOMAL_L10"/>
    <property type="match status" value="1"/>
</dbReference>
<reference key="1">
    <citation type="journal article" date="2000" name="Nature">
        <title>Complete DNA sequence of a serogroup A strain of Neisseria meningitidis Z2491.</title>
        <authorList>
            <person name="Parkhill J."/>
            <person name="Achtman M."/>
            <person name="James K.D."/>
            <person name="Bentley S.D."/>
            <person name="Churcher C.M."/>
            <person name="Klee S.R."/>
            <person name="Morelli G."/>
            <person name="Basham D."/>
            <person name="Brown D."/>
            <person name="Chillingworth T."/>
            <person name="Davies R.M."/>
            <person name="Davis P."/>
            <person name="Devlin K."/>
            <person name="Feltwell T."/>
            <person name="Hamlin N."/>
            <person name="Holroyd S."/>
            <person name="Jagels K."/>
            <person name="Leather S."/>
            <person name="Moule S."/>
            <person name="Mungall K.L."/>
            <person name="Quail M.A."/>
            <person name="Rajandream M.A."/>
            <person name="Rutherford K.M."/>
            <person name="Simmonds M."/>
            <person name="Skelton J."/>
            <person name="Whitehead S."/>
            <person name="Spratt B.G."/>
            <person name="Barrell B.G."/>
        </authorList>
    </citation>
    <scope>NUCLEOTIDE SEQUENCE [LARGE SCALE GENOMIC DNA]</scope>
    <source>
        <strain>DSM 15465 / Z2491</strain>
    </source>
</reference>
<proteinExistence type="inferred from homology"/>
<comment type="function">
    <text evidence="1">Forms part of the ribosomal stalk, playing a central role in the interaction of the ribosome with GTP-bound translation factors.</text>
</comment>
<comment type="subunit">
    <text evidence="1">Part of the ribosomal stalk of the 50S ribosomal subunit. The N-terminus interacts with L11 and the large rRNA to form the base of the stalk. The C-terminus forms an elongated spine to which L12 dimers bind in a sequential fashion forming a multimeric L10(L12)X complex (By similarity).</text>
</comment>
<comment type="similarity">
    <text evidence="2">Belongs to the universal ribosomal protein uL10 family.</text>
</comment>
<gene>
    <name type="primary">rplJ</name>
    <name type="ordered locus">NMA0144</name>
</gene>
<evidence type="ECO:0000250" key="1"/>
<evidence type="ECO:0000305" key="2"/>